<proteinExistence type="inferred from homology"/>
<accession>Q5PJ47</accession>
<name>ULAB_SALPA</name>
<feature type="chain" id="PRO_0000230324" description="Ascorbate-specific PTS system EIIB component">
    <location>
        <begin position="1"/>
        <end position="101"/>
    </location>
</feature>
<feature type="domain" description="PTS EIIB type-2" evidence="3">
    <location>
        <begin position="3"/>
        <end position="96"/>
    </location>
</feature>
<feature type="active site" description="Phosphocysteine intermediate" evidence="1 4">
    <location>
        <position position="9"/>
    </location>
</feature>
<feature type="modified residue" description="Phosphocysteine" evidence="1 4">
    <location>
        <position position="9"/>
    </location>
</feature>
<evidence type="ECO:0000250" key="1">
    <source>
        <dbReference type="UniProtKB" id="P00550"/>
    </source>
</evidence>
<evidence type="ECO:0000250" key="2">
    <source>
        <dbReference type="UniProtKB" id="P69822"/>
    </source>
</evidence>
<evidence type="ECO:0000255" key="3">
    <source>
        <dbReference type="PROSITE-ProRule" id="PRU00422"/>
    </source>
</evidence>
<evidence type="ECO:0000305" key="4"/>
<sequence>MTVRILAVCGNGQGSSMIMKMKVDQFLTQSNIDHTVNSCAVGEYKSELSGADIIIASTHIAGEITVTGNKYVVGVRNMLSPADFGPKLLEVIKAHFPQDVK</sequence>
<comment type="function">
    <text evidence="2">The phosphoenolpyruvate-dependent sugar phosphotransferase system (sugar PTS), a major carbohydrate active transport system, catalyzes the phosphorylation of incoming sugar substrates concomitantly with their translocation across the cell membrane. The enzyme II UlaABC PTS system is involved in ascorbate transport.</text>
</comment>
<comment type="catalytic activity">
    <reaction evidence="2">
        <text>N(pros)-phospho-L-histidyl-[protein] + L-ascorbate(out) = L-ascorbate 6-phosphate(in) + L-histidyl-[protein]</text>
        <dbReference type="Rhea" id="RHEA:42436"/>
        <dbReference type="Rhea" id="RHEA-COMP:9745"/>
        <dbReference type="Rhea" id="RHEA-COMP:9746"/>
        <dbReference type="ChEBI" id="CHEBI:29979"/>
        <dbReference type="ChEBI" id="CHEBI:38290"/>
        <dbReference type="ChEBI" id="CHEBI:61698"/>
        <dbReference type="ChEBI" id="CHEBI:64837"/>
        <dbReference type="EC" id="2.7.1.194"/>
    </reaction>
</comment>
<comment type="subcellular location">
    <subcellularLocation>
        <location evidence="4">Cytoplasm</location>
    </subcellularLocation>
</comment>
<comment type="induction">
    <text evidence="2">Induced by L-ascorbate. Repressed by UlaR.</text>
</comment>
<comment type="domain">
    <text evidence="3">The PTS EIIB type-2 domain is phosphorylated by phospho-EIIA on a cysteinyl residue. Then, it transfers the phosphoryl group to the sugar substrate concomitantly with the sugar uptake processed by the PTS EIIC type-2 domain.</text>
</comment>
<keyword id="KW-0963">Cytoplasm</keyword>
<keyword id="KW-0418">Kinase</keyword>
<keyword id="KW-0597">Phosphoprotein</keyword>
<keyword id="KW-0598">Phosphotransferase system</keyword>
<keyword id="KW-0808">Transferase</keyword>
<keyword id="KW-0813">Transport</keyword>
<dbReference type="EC" id="2.7.1.194" evidence="2"/>
<dbReference type="EMBL" id="CP000026">
    <property type="protein sequence ID" value="AAV79938.1"/>
    <property type="molecule type" value="Genomic_DNA"/>
</dbReference>
<dbReference type="RefSeq" id="WP_000218360.1">
    <property type="nucleotide sequence ID" value="NC_006511.1"/>
</dbReference>
<dbReference type="SMR" id="Q5PJ47"/>
<dbReference type="KEGG" id="spt:SPA4201"/>
<dbReference type="HOGENOM" id="CLU_159248_0_0_6"/>
<dbReference type="Proteomes" id="UP000008185">
    <property type="component" value="Chromosome"/>
</dbReference>
<dbReference type="GO" id="GO:0005737">
    <property type="term" value="C:cytoplasm"/>
    <property type="evidence" value="ECO:0007669"/>
    <property type="project" value="UniProtKB-SubCell"/>
</dbReference>
<dbReference type="GO" id="GO:0016301">
    <property type="term" value="F:kinase activity"/>
    <property type="evidence" value="ECO:0007669"/>
    <property type="project" value="UniProtKB-KW"/>
</dbReference>
<dbReference type="GO" id="GO:0008982">
    <property type="term" value="F:protein-N(PI)-phosphohistidine-sugar phosphotransferase activity"/>
    <property type="evidence" value="ECO:0007669"/>
    <property type="project" value="InterPro"/>
</dbReference>
<dbReference type="GO" id="GO:0009401">
    <property type="term" value="P:phosphoenolpyruvate-dependent sugar phosphotransferase system"/>
    <property type="evidence" value="ECO:0007669"/>
    <property type="project" value="UniProtKB-KW"/>
</dbReference>
<dbReference type="CDD" id="cd05563">
    <property type="entry name" value="PTS_IIB_ascorbate"/>
    <property type="match status" value="1"/>
</dbReference>
<dbReference type="FunFam" id="3.40.50.2300:FF:000030">
    <property type="entry name" value="PTS system, ascorbate-specific, IIB component"/>
    <property type="match status" value="1"/>
</dbReference>
<dbReference type="Gene3D" id="3.40.50.2300">
    <property type="match status" value="1"/>
</dbReference>
<dbReference type="InterPro" id="IPR036095">
    <property type="entry name" value="PTS_EIIB-like_sf"/>
</dbReference>
<dbReference type="InterPro" id="IPR013011">
    <property type="entry name" value="PTS_EIIB_2"/>
</dbReference>
<dbReference type="InterPro" id="IPR003501">
    <property type="entry name" value="PTS_EIIB_2/3"/>
</dbReference>
<dbReference type="NCBIfam" id="NF007586">
    <property type="entry name" value="PRK10222.1"/>
    <property type="match status" value="1"/>
</dbReference>
<dbReference type="Pfam" id="PF02302">
    <property type="entry name" value="PTS_IIB"/>
    <property type="match status" value="1"/>
</dbReference>
<dbReference type="SUPFAM" id="SSF52794">
    <property type="entry name" value="PTS system IIB component-like"/>
    <property type="match status" value="1"/>
</dbReference>
<dbReference type="PROSITE" id="PS51099">
    <property type="entry name" value="PTS_EIIB_TYPE_2"/>
    <property type="match status" value="1"/>
</dbReference>
<gene>
    <name type="primary">ulaB</name>
    <name type="ordered locus">SPA4201</name>
</gene>
<reference key="1">
    <citation type="journal article" date="2004" name="Nat. Genet.">
        <title>Comparison of genome degradation in Paratyphi A and Typhi, human-restricted serovars of Salmonella enterica that cause typhoid.</title>
        <authorList>
            <person name="McClelland M."/>
            <person name="Sanderson K.E."/>
            <person name="Clifton S.W."/>
            <person name="Latreille P."/>
            <person name="Porwollik S."/>
            <person name="Sabo A."/>
            <person name="Meyer R."/>
            <person name="Bieri T."/>
            <person name="Ozersky P."/>
            <person name="McLellan M."/>
            <person name="Harkins C.R."/>
            <person name="Wang C."/>
            <person name="Nguyen C."/>
            <person name="Berghoff A."/>
            <person name="Elliott G."/>
            <person name="Kohlberg S."/>
            <person name="Strong C."/>
            <person name="Du F."/>
            <person name="Carter J."/>
            <person name="Kremizki C."/>
            <person name="Layman D."/>
            <person name="Leonard S."/>
            <person name="Sun H."/>
            <person name="Fulton L."/>
            <person name="Nash W."/>
            <person name="Miner T."/>
            <person name="Minx P."/>
            <person name="Delehaunty K."/>
            <person name="Fronick C."/>
            <person name="Magrini V."/>
            <person name="Nhan M."/>
            <person name="Warren W."/>
            <person name="Florea L."/>
            <person name="Spieth J."/>
            <person name="Wilson R.K."/>
        </authorList>
    </citation>
    <scope>NUCLEOTIDE SEQUENCE [LARGE SCALE GENOMIC DNA]</scope>
    <source>
        <strain>ATCC 9150 / SARB42</strain>
    </source>
</reference>
<organism>
    <name type="scientific">Salmonella paratyphi A (strain ATCC 9150 / SARB42)</name>
    <dbReference type="NCBI Taxonomy" id="295319"/>
    <lineage>
        <taxon>Bacteria</taxon>
        <taxon>Pseudomonadati</taxon>
        <taxon>Pseudomonadota</taxon>
        <taxon>Gammaproteobacteria</taxon>
        <taxon>Enterobacterales</taxon>
        <taxon>Enterobacteriaceae</taxon>
        <taxon>Salmonella</taxon>
    </lineage>
</organism>
<protein>
    <recommendedName>
        <fullName evidence="2">Ascorbate-specific PTS system EIIB component</fullName>
        <ecNumber evidence="2">2.7.1.194</ecNumber>
    </recommendedName>
    <alternativeName>
        <fullName evidence="2">Ascorbate-specific phosphotransferase enzyme IIB component</fullName>
    </alternativeName>
</protein>